<accession>O05974</accession>
<proteinExistence type="inferred from homology"/>
<name>DPO3A_RICPR</name>
<feature type="chain" id="PRO_0000103336" description="DNA polymerase III subunit alpha">
    <location>
        <begin position="1"/>
        <end position="1182"/>
    </location>
</feature>
<feature type="sequence conflict" description="In Ref. 2; CAA72479." evidence="2" ref="2">
    <original>I</original>
    <variation>V</variation>
    <location>
        <position position="376"/>
    </location>
</feature>
<keyword id="KW-0963">Cytoplasm</keyword>
<keyword id="KW-0235">DNA replication</keyword>
<keyword id="KW-0239">DNA-directed DNA polymerase</keyword>
<keyword id="KW-0548">Nucleotidyltransferase</keyword>
<keyword id="KW-1185">Reference proteome</keyword>
<keyword id="KW-0808">Transferase</keyword>
<reference key="1">
    <citation type="journal article" date="1998" name="Nature">
        <title>The genome sequence of Rickettsia prowazekii and the origin of mitochondria.</title>
        <authorList>
            <person name="Andersson S.G.E."/>
            <person name="Zomorodipour A."/>
            <person name="Andersson J.O."/>
            <person name="Sicheritz-Ponten T."/>
            <person name="Alsmark U.C.M."/>
            <person name="Podowski R.M."/>
            <person name="Naeslund A.K."/>
            <person name="Eriksson A.-S."/>
            <person name="Winkler H.H."/>
            <person name="Kurland C.G."/>
        </authorList>
    </citation>
    <scope>NUCLEOTIDE SEQUENCE [LARGE SCALE GENOMIC DNA]</scope>
    <source>
        <strain>Madrid E</strain>
    </source>
</reference>
<reference key="2">
    <citation type="journal article" date="1997" name="Microbiology">
        <title>Genomic rearrangements during evolution of the obligate intracellular parasite Rickettsia prowazekii as inferred from an analysis of 52015 bp nucleotide sequence.</title>
        <authorList>
            <person name="Andersson J.O."/>
            <person name="Andersson S.G.E."/>
        </authorList>
    </citation>
    <scope>NUCLEOTIDE SEQUENCE [GENOMIC DNA] OF 1-780</scope>
    <source>
        <strain>Madrid E</strain>
    </source>
</reference>
<reference key="3">
    <citation type="journal article" date="1999" name="Mol. Biol. Evol.">
        <title>Genome degradation is an ongoing process in Rickettsia.</title>
        <authorList>
            <person name="Andersson J.O."/>
            <person name="Andersson S.G.E."/>
        </authorList>
    </citation>
    <scope>NUCLEOTIDE SEQUENCE [GENOMIC DNA] OF 822-1182</scope>
    <source>
        <strain>B</strain>
        <strain>Madrid E</strain>
    </source>
</reference>
<dbReference type="EC" id="2.7.7.7"/>
<dbReference type="EMBL" id="AJ235273">
    <property type="protein sequence ID" value="CAA15204.1"/>
    <property type="molecule type" value="Genomic_DNA"/>
</dbReference>
<dbReference type="EMBL" id="Y11785">
    <property type="protein sequence ID" value="CAA72479.1"/>
    <property type="molecule type" value="Genomic_DNA"/>
</dbReference>
<dbReference type="EMBL" id="AJ238755">
    <property type="protein sequence ID" value="CAB56087.1"/>
    <property type="molecule type" value="Genomic_DNA"/>
</dbReference>
<dbReference type="EMBL" id="AJ238756">
    <property type="protein sequence ID" value="CAB56091.1"/>
    <property type="molecule type" value="Genomic_DNA"/>
</dbReference>
<dbReference type="PIR" id="D71638">
    <property type="entry name" value="D71638"/>
</dbReference>
<dbReference type="RefSeq" id="NP_221128.1">
    <property type="nucleotide sequence ID" value="NC_000963.1"/>
</dbReference>
<dbReference type="RefSeq" id="WP_004599648.1">
    <property type="nucleotide sequence ID" value="NC_000963.1"/>
</dbReference>
<dbReference type="SMR" id="O05974"/>
<dbReference type="STRING" id="272947.gene:17555847"/>
<dbReference type="EnsemblBacteria" id="CAA15204">
    <property type="protein sequence ID" value="CAA15204"/>
    <property type="gene ID" value="CAA15204"/>
</dbReference>
<dbReference type="GeneID" id="57569901"/>
<dbReference type="KEGG" id="rpr:RP778"/>
<dbReference type="PATRIC" id="fig|272947.5.peg.814"/>
<dbReference type="eggNOG" id="COG0587">
    <property type="taxonomic scope" value="Bacteria"/>
</dbReference>
<dbReference type="HOGENOM" id="CLU_001600_0_0_5"/>
<dbReference type="OrthoDB" id="9803237at2"/>
<dbReference type="Proteomes" id="UP000002480">
    <property type="component" value="Chromosome"/>
</dbReference>
<dbReference type="GO" id="GO:0005737">
    <property type="term" value="C:cytoplasm"/>
    <property type="evidence" value="ECO:0007669"/>
    <property type="project" value="UniProtKB-SubCell"/>
</dbReference>
<dbReference type="GO" id="GO:0008408">
    <property type="term" value="F:3'-5' exonuclease activity"/>
    <property type="evidence" value="ECO:0007669"/>
    <property type="project" value="InterPro"/>
</dbReference>
<dbReference type="GO" id="GO:0003887">
    <property type="term" value="F:DNA-directed DNA polymerase activity"/>
    <property type="evidence" value="ECO:0007669"/>
    <property type="project" value="UniProtKB-KW"/>
</dbReference>
<dbReference type="GO" id="GO:0003676">
    <property type="term" value="F:nucleic acid binding"/>
    <property type="evidence" value="ECO:0007669"/>
    <property type="project" value="InterPro"/>
</dbReference>
<dbReference type="GO" id="GO:0006260">
    <property type="term" value="P:DNA replication"/>
    <property type="evidence" value="ECO:0007669"/>
    <property type="project" value="UniProtKB-KW"/>
</dbReference>
<dbReference type="CDD" id="cd04485">
    <property type="entry name" value="DnaE_OBF"/>
    <property type="match status" value="1"/>
</dbReference>
<dbReference type="CDD" id="cd07433">
    <property type="entry name" value="PHP_PolIIIA_DnaE1"/>
    <property type="match status" value="1"/>
</dbReference>
<dbReference type="Gene3D" id="1.10.150.870">
    <property type="match status" value="1"/>
</dbReference>
<dbReference type="Gene3D" id="1.10.10.1600">
    <property type="entry name" value="Bacterial DNA polymerase III alpha subunit, thumb domain"/>
    <property type="match status" value="1"/>
</dbReference>
<dbReference type="Gene3D" id="3.20.20.140">
    <property type="entry name" value="Metal-dependent hydrolases"/>
    <property type="match status" value="1"/>
</dbReference>
<dbReference type="InterPro" id="IPR011708">
    <property type="entry name" value="DNA_pol3_alpha_NTPase_dom"/>
</dbReference>
<dbReference type="InterPro" id="IPR041931">
    <property type="entry name" value="DNA_pol3_alpha_thumb_dom"/>
</dbReference>
<dbReference type="InterPro" id="IPR040982">
    <property type="entry name" value="DNA_pol3_finger"/>
</dbReference>
<dbReference type="InterPro" id="IPR004805">
    <property type="entry name" value="DnaE2/DnaE/PolC"/>
</dbReference>
<dbReference type="InterPro" id="IPR029460">
    <property type="entry name" value="DNAPol_HHH"/>
</dbReference>
<dbReference type="InterPro" id="IPR004365">
    <property type="entry name" value="NA-bd_OB_tRNA"/>
</dbReference>
<dbReference type="InterPro" id="IPR004013">
    <property type="entry name" value="PHP_dom"/>
</dbReference>
<dbReference type="InterPro" id="IPR003141">
    <property type="entry name" value="Pol/His_phosphatase_N"/>
</dbReference>
<dbReference type="InterPro" id="IPR016195">
    <property type="entry name" value="Pol/histidinol_Pase-like"/>
</dbReference>
<dbReference type="InterPro" id="IPR049821">
    <property type="entry name" value="PolIIIA_DnaE1_PHP"/>
</dbReference>
<dbReference type="NCBIfam" id="TIGR00594">
    <property type="entry name" value="polc"/>
    <property type="match status" value="1"/>
</dbReference>
<dbReference type="NCBIfam" id="NF004226">
    <property type="entry name" value="PRK05673.1"/>
    <property type="match status" value="1"/>
</dbReference>
<dbReference type="PANTHER" id="PTHR32294">
    <property type="entry name" value="DNA POLYMERASE III SUBUNIT ALPHA"/>
    <property type="match status" value="1"/>
</dbReference>
<dbReference type="PANTHER" id="PTHR32294:SF0">
    <property type="entry name" value="DNA POLYMERASE III SUBUNIT ALPHA"/>
    <property type="match status" value="1"/>
</dbReference>
<dbReference type="Pfam" id="PF07733">
    <property type="entry name" value="DNA_pol3_alpha"/>
    <property type="match status" value="1"/>
</dbReference>
<dbReference type="Pfam" id="PF17657">
    <property type="entry name" value="DNA_pol3_finger"/>
    <property type="match status" value="1"/>
</dbReference>
<dbReference type="Pfam" id="PF14579">
    <property type="entry name" value="HHH_6"/>
    <property type="match status" value="1"/>
</dbReference>
<dbReference type="Pfam" id="PF02811">
    <property type="entry name" value="PHP"/>
    <property type="match status" value="1"/>
</dbReference>
<dbReference type="Pfam" id="PF01336">
    <property type="entry name" value="tRNA_anti-codon"/>
    <property type="match status" value="1"/>
</dbReference>
<dbReference type="SMART" id="SM00481">
    <property type="entry name" value="POLIIIAc"/>
    <property type="match status" value="1"/>
</dbReference>
<dbReference type="SUPFAM" id="SSF89550">
    <property type="entry name" value="PHP domain-like"/>
    <property type="match status" value="1"/>
</dbReference>
<comment type="function">
    <text evidence="1">DNA polymerase III is a complex, multichain enzyme responsible for most of the replicative synthesis in bacteria. This DNA polymerase also exhibits 3' to 5' exonuclease activity. The alpha chain is the DNA polymerase (By similarity).</text>
</comment>
<comment type="catalytic activity">
    <reaction>
        <text>DNA(n) + a 2'-deoxyribonucleoside 5'-triphosphate = DNA(n+1) + diphosphate</text>
        <dbReference type="Rhea" id="RHEA:22508"/>
        <dbReference type="Rhea" id="RHEA-COMP:17339"/>
        <dbReference type="Rhea" id="RHEA-COMP:17340"/>
        <dbReference type="ChEBI" id="CHEBI:33019"/>
        <dbReference type="ChEBI" id="CHEBI:61560"/>
        <dbReference type="ChEBI" id="CHEBI:173112"/>
        <dbReference type="EC" id="2.7.7.7"/>
    </reaction>
</comment>
<comment type="subunit">
    <text evidence="1">DNA polymerase III contains a core (composed of alpha, epsilon and theta chains) that associates with a tau subunit. This core dimerizes to form the PolIII' complex. PolIII' associates with the gamma complex (composed of gamma, delta, delta', psi and chi chains) and with the beta chain to form the complete DNA polymerase III complex (By similarity).</text>
</comment>
<comment type="subcellular location">
    <subcellularLocation>
        <location evidence="1">Cytoplasm</location>
    </subcellularLocation>
</comment>
<comment type="similarity">
    <text evidence="2">Belongs to the DNA polymerase type-C family. DnaE subfamily.</text>
</comment>
<protein>
    <recommendedName>
        <fullName>DNA polymerase III subunit alpha</fullName>
        <ecNumber>2.7.7.7</ecNumber>
    </recommendedName>
</protein>
<organism>
    <name type="scientific">Rickettsia prowazekii (strain Madrid E)</name>
    <dbReference type="NCBI Taxonomy" id="272947"/>
    <lineage>
        <taxon>Bacteria</taxon>
        <taxon>Pseudomonadati</taxon>
        <taxon>Pseudomonadota</taxon>
        <taxon>Alphaproteobacteria</taxon>
        <taxon>Rickettsiales</taxon>
        <taxon>Rickettsiaceae</taxon>
        <taxon>Rickettsieae</taxon>
        <taxon>Rickettsia</taxon>
        <taxon>typhus group</taxon>
    </lineage>
</organism>
<evidence type="ECO:0000250" key="1"/>
<evidence type="ECO:0000305" key="2"/>
<sequence>MQPEFIHLRTQSSYSFLESALTIEKVVELALLHKMPALCLSDRGNLFGSLEFSLYAVKKKLQPIHGVILNIQYDINAFAQILLIAKDETGYKNLLKLSSLTFTKNDRKICEHIGFEDLIKYQEGVIALCCYTDGIVGKCLLARKQEQAILFARRLQAILGDRFYFEIMRHDLPEEQFIENSYIQIASELSIPIVATNKVLFSEKSMHYAHDVLLCISEGVTKEYPDRKTVSENCYFKSPAEMRKLFSDLPNAIQNTINLRERCYFAAHPNPPMLPNFSTQDISETYLIRKYATEGLLARLVTKFKAENISLEHQEKLKTEYFTRLNYELDIICNMNFAGYFLIVSDFIKWSKKQGILVGPGRGSGAGSVVAWSLLITDLDPIKFGLLFERFLNPERISMPDFDIDFCQERREEVINYVRSKYGPNRVGQIITFGKMQAKAVIKDVARVLSLPYKLADYLTELVPFSAINPVSLEQAIREVPELANAAKGNGLYNLEGDAELIKLVLDTSLILEGLHRHSSTHAAGIVIAGTDLVDIVPVYKDANADMLIVGYSMKYSEIAGLIKFDFLGLQTLTVITNCKKLLKEQGIKIDFDDMTFDDKKTYQMLCKGKGVGVFQFESIGMKDALRRLKPDSIHDLIALGALYRPGPMENIPTYIACKHKLQQPDYLHKLLEPILEETYGVVIYQEQVQRIAQVLAGYTLGAADLLRRAMGKKIKKEMEEQEEIFVKGAIANNISPSQAKSIFSTVAKFAGYGFNKAHAAAYGVISYQTAYLKANYPAEFLVACLNLELNNHDKINLFLQEAKDNGIKIIAPNINISEGYFSVKSSNTVITHSTKSVISRLNCDIKKIAKDTAVKPLYCKDESTIIFALGAIKGVTANFGKLVTDERKARGAFKSITDFIERLPPKSINSKLLENLIKAGCFDELHDNRLQLFLSIPKLIAYSTSYHQEQESNQFSLIKVSSLSPTILVSSDYADKNTLAFYEFEAMGLFLSNHPLTEYQGIFSRLNILNTRDLYNKLPNGTNRVTLAGVIQKKDSRMSARGRFVTLVLSDPENIFELTIFSEEVLKDYVHLLDVKSLVVVNCDVVKDEGGIKLTAKSFLSIEDVMNNRQFELQLYPQNYAELEQIITLLASRTSNGYQSNAKATIYLQSKDVKHFIAKITLSETFFLQVQDFEVLNQYIR</sequence>
<gene>
    <name type="primary">dnaE</name>
    <name type="ordered locus">RP778</name>
</gene>